<protein>
    <recommendedName>
        <fullName>Protein ref(2)P</fullName>
    </recommendedName>
    <alternativeName>
        <fullName>Refractory to sigma P</fullName>
    </alternativeName>
</protein>
<reference key="1">
    <citation type="journal article" date="1996" name="Mol. Biol. Evol.">
        <title>Molecular population genetics of ref(2)P, a locus which confers viral resistance in Drosophila.</title>
        <authorList>
            <person name="Wayne M.L."/>
            <person name="Contamine D."/>
            <person name="Kreitman M."/>
        </authorList>
    </citation>
    <scope>NUCLEOTIDE SEQUENCE [GENOMIC DNA]</scope>
    <source>
        <strain>IM2</strain>
    </source>
</reference>
<name>REF2P_DROSI</name>
<gene>
    <name type="primary">ref(2)P</name>
</gene>
<feature type="chain" id="PRO_0000097238" description="Protein ref(2)P">
    <location>
        <begin position="1"/>
        <end position="599"/>
    </location>
</feature>
<feature type="domain" description="PB1" evidence="4">
    <location>
        <begin position="3"/>
        <end position="88"/>
    </location>
</feature>
<feature type="repeat" description="1">
    <location>
        <begin position="386"/>
        <end position="393"/>
    </location>
</feature>
<feature type="repeat" description="2">
    <location>
        <begin position="399"/>
        <end position="406"/>
    </location>
</feature>
<feature type="repeat" description="3">
    <location>
        <begin position="407"/>
        <end position="413"/>
    </location>
</feature>
<feature type="domain" description="UBA" evidence="2">
    <location>
        <begin position="550"/>
        <end position="595"/>
    </location>
</feature>
<feature type="zinc finger region" description="ZZ-type" evidence="3">
    <location>
        <begin position="122"/>
        <end position="173"/>
    </location>
</feature>
<feature type="region of interest" description="Disordered" evidence="5">
    <location>
        <begin position="192"/>
        <end position="225"/>
    </location>
</feature>
<feature type="region of interest" description="Disordered" evidence="5">
    <location>
        <begin position="245"/>
        <end position="319"/>
    </location>
</feature>
<feature type="region of interest" description="Disordered" evidence="5">
    <location>
        <begin position="357"/>
        <end position="453"/>
    </location>
</feature>
<feature type="region of interest" description="3 X 8 AA repeats of S-A-N-Q-S-X-X-P">
    <location>
        <begin position="386"/>
        <end position="413"/>
    </location>
</feature>
<feature type="region of interest" description="Disordered" evidence="5">
    <location>
        <begin position="507"/>
        <end position="544"/>
    </location>
</feature>
<feature type="compositionally biased region" description="Low complexity" evidence="5">
    <location>
        <begin position="199"/>
        <end position="211"/>
    </location>
</feature>
<feature type="compositionally biased region" description="Basic and acidic residues" evidence="5">
    <location>
        <begin position="276"/>
        <end position="286"/>
    </location>
</feature>
<feature type="compositionally biased region" description="Polar residues" evidence="5">
    <location>
        <begin position="291"/>
        <end position="319"/>
    </location>
</feature>
<feature type="compositionally biased region" description="Low complexity" evidence="5">
    <location>
        <begin position="375"/>
        <end position="411"/>
    </location>
</feature>
<feature type="compositionally biased region" description="Polar residues" evidence="5">
    <location>
        <begin position="412"/>
        <end position="423"/>
    </location>
</feature>
<feature type="compositionally biased region" description="Low complexity" evidence="5">
    <location>
        <begin position="511"/>
        <end position="536"/>
    </location>
</feature>
<feature type="binding site" evidence="3">
    <location>
        <position position="127"/>
    </location>
    <ligand>
        <name>Zn(2+)</name>
        <dbReference type="ChEBI" id="CHEBI:29105"/>
        <label>1</label>
    </ligand>
</feature>
<feature type="binding site" evidence="3">
    <location>
        <position position="130"/>
    </location>
    <ligand>
        <name>Zn(2+)</name>
        <dbReference type="ChEBI" id="CHEBI:29105"/>
        <label>1</label>
    </ligand>
</feature>
<feature type="binding site" evidence="3">
    <location>
        <position position="142"/>
    </location>
    <ligand>
        <name>Zn(2+)</name>
        <dbReference type="ChEBI" id="CHEBI:29105"/>
        <label>2</label>
    </ligand>
</feature>
<feature type="binding site" evidence="3">
    <location>
        <position position="145"/>
    </location>
    <ligand>
        <name>Zn(2+)</name>
        <dbReference type="ChEBI" id="CHEBI:29105"/>
        <label>2</label>
    </ligand>
</feature>
<feature type="binding site" evidence="3">
    <location>
        <position position="151"/>
    </location>
    <ligand>
        <name>Zn(2+)</name>
        <dbReference type="ChEBI" id="CHEBI:29105"/>
        <label>1</label>
    </ligand>
</feature>
<feature type="binding site" evidence="3">
    <location>
        <position position="154"/>
    </location>
    <ligand>
        <name>Zn(2+)</name>
        <dbReference type="ChEBI" id="CHEBI:29105"/>
        <label>1</label>
    </ligand>
</feature>
<feature type="binding site" evidence="3">
    <location>
        <position position="160"/>
    </location>
    <ligand>
        <name>Zn(2+)</name>
        <dbReference type="ChEBI" id="CHEBI:29105"/>
        <label>2</label>
    </ligand>
</feature>
<feature type="binding site" evidence="3">
    <location>
        <position position="163"/>
    </location>
    <ligand>
        <name>Zn(2+)</name>
        <dbReference type="ChEBI" id="CHEBI:29105"/>
        <label>2</label>
    </ligand>
</feature>
<proteinExistence type="inferred from homology"/>
<sequence>MPEKLLKITYQGAGPQKKINAYLRMPSQNYTILRREIELYLFQERQLPKCDVRTFWIDADQDEIEIVNQNDYEIFLAKCESNMHVQVAPLAPIEEPKATKQEGSSANAEAPSVDDPSNFTIHDSVQCDGCGLAPLIGFRYKCVQCSNFDLCQKCESAHKHPEHLMLRMPTNNGPGMVDAWFTGPGLGRRCGRRSRGHCPFQEASQPAPAAEPARDSRRERRHARRHAGVLSQFVEMMTNLPLNTTTATAPAEPQKPKAAEQTESPPQAEPTVTAEKATESEAKPTEPMKVNTDQSVPTTEDPVTTPRSTEPTTPVINLDNLSQIVPPEYMRAGIEILNNFSEMFSKMIDTTDVGDSGIFAPSTTSSAENKKPEEQSQSSGQSAASSASQSAVPSAAPSANQSNVPSANQSATPSISGSISDAQLETEPLNPKPLETTTETEQDRRRSDSLDPEWQLIDNAYSANNSNLINLDTTNPTAAPQQPVRDFGQLGELLRQHMNEEARVEQASANTQTAQVDTVSTSTSTTSVTTNSVGTSPAAPDDKRTVPVYHTDERINQSIHAMMAMGFSNEGAWLTQLLESVQGNIPAALDVMHVSQTRN</sequence>
<organism>
    <name type="scientific">Drosophila simulans</name>
    <name type="common">Fruit fly</name>
    <dbReference type="NCBI Taxonomy" id="7240"/>
    <lineage>
        <taxon>Eukaryota</taxon>
        <taxon>Metazoa</taxon>
        <taxon>Ecdysozoa</taxon>
        <taxon>Arthropoda</taxon>
        <taxon>Hexapoda</taxon>
        <taxon>Insecta</taxon>
        <taxon>Pterygota</taxon>
        <taxon>Neoptera</taxon>
        <taxon>Endopterygota</taxon>
        <taxon>Diptera</taxon>
        <taxon>Brachycera</taxon>
        <taxon>Muscomorpha</taxon>
        <taxon>Ephydroidea</taxon>
        <taxon>Drosophilidae</taxon>
        <taxon>Drosophila</taxon>
        <taxon>Sophophora</taxon>
    </lineage>
</organism>
<comment type="function">
    <text evidence="1">Required for selective autophagy activation by ubiquitinated proteins. Implicated in sigma rhabdovirus multiplication and necessary for male fertility. Involved in activating transcription of Drs.</text>
</comment>
<comment type="subunit">
    <text evidence="1">Interacts with aPKC and Traf6.</text>
</comment>
<comment type="subcellular location">
    <subcellularLocation>
        <location evidence="1">Nucleus</location>
    </subcellularLocation>
    <subcellularLocation>
        <location evidence="1">Cytoplasm</location>
    </subcellularLocation>
</comment>
<dbReference type="EMBL" id="U23930">
    <property type="protein sequence ID" value="AAA98842.1"/>
    <property type="molecule type" value="Genomic_DNA"/>
</dbReference>
<dbReference type="SMR" id="Q24629"/>
<dbReference type="OrthoDB" id="441278at2759"/>
<dbReference type="ChiTaRS" id="ref(2)P">
    <property type="organism name" value="fly"/>
</dbReference>
<dbReference type="GO" id="GO:0016235">
    <property type="term" value="C:aggresome"/>
    <property type="evidence" value="ECO:0007669"/>
    <property type="project" value="TreeGrafter"/>
</dbReference>
<dbReference type="GO" id="GO:0044753">
    <property type="term" value="C:amphisome"/>
    <property type="evidence" value="ECO:0007669"/>
    <property type="project" value="TreeGrafter"/>
</dbReference>
<dbReference type="GO" id="GO:0005634">
    <property type="term" value="C:nucleus"/>
    <property type="evidence" value="ECO:0007669"/>
    <property type="project" value="UniProtKB-SubCell"/>
</dbReference>
<dbReference type="GO" id="GO:0003677">
    <property type="term" value="F:DNA binding"/>
    <property type="evidence" value="ECO:0007669"/>
    <property type="project" value="UniProtKB-KW"/>
</dbReference>
<dbReference type="GO" id="GO:0070530">
    <property type="term" value="F:K63-linked polyubiquitin modification-dependent protein binding"/>
    <property type="evidence" value="ECO:0007669"/>
    <property type="project" value="TreeGrafter"/>
</dbReference>
<dbReference type="GO" id="GO:0005080">
    <property type="term" value="F:protein kinase C binding"/>
    <property type="evidence" value="ECO:0007669"/>
    <property type="project" value="TreeGrafter"/>
</dbReference>
<dbReference type="GO" id="GO:0043495">
    <property type="term" value="F:protein-membrane adaptor activity"/>
    <property type="evidence" value="ECO:0007669"/>
    <property type="project" value="EnsemblMetazoa"/>
</dbReference>
<dbReference type="GO" id="GO:0008270">
    <property type="term" value="F:zinc ion binding"/>
    <property type="evidence" value="ECO:0007669"/>
    <property type="project" value="UniProtKB-KW"/>
</dbReference>
<dbReference type="GO" id="GO:0035973">
    <property type="term" value="P:aggrephagy"/>
    <property type="evidence" value="ECO:0007669"/>
    <property type="project" value="TreeGrafter"/>
</dbReference>
<dbReference type="GO" id="GO:0007032">
    <property type="term" value="P:endosome organization"/>
    <property type="evidence" value="ECO:0007669"/>
    <property type="project" value="TreeGrafter"/>
</dbReference>
<dbReference type="GO" id="GO:0000423">
    <property type="term" value="P:mitophagy"/>
    <property type="evidence" value="ECO:0007669"/>
    <property type="project" value="TreeGrafter"/>
</dbReference>
<dbReference type="GO" id="GO:0030382">
    <property type="term" value="P:sperm mitochondrion organization"/>
    <property type="evidence" value="ECO:0007669"/>
    <property type="project" value="EnsemblMetazoa"/>
</dbReference>
<dbReference type="CDD" id="cd14320">
    <property type="entry name" value="UBA_SQSTM"/>
    <property type="match status" value="1"/>
</dbReference>
<dbReference type="CDD" id="cd02340">
    <property type="entry name" value="ZZ_NBR1_like"/>
    <property type="match status" value="1"/>
</dbReference>
<dbReference type="FunFam" id="3.30.60.90:FF:000016">
    <property type="entry name" value="Refractory to sigma P"/>
    <property type="match status" value="1"/>
</dbReference>
<dbReference type="FunFam" id="1.10.8.10:FF:000034">
    <property type="entry name" value="Sequestosome 1"/>
    <property type="match status" value="1"/>
</dbReference>
<dbReference type="Gene3D" id="3.30.60.90">
    <property type="match status" value="1"/>
</dbReference>
<dbReference type="Gene3D" id="1.10.8.10">
    <property type="entry name" value="DNA helicase RuvA subunit, C-terminal domain"/>
    <property type="match status" value="1"/>
</dbReference>
<dbReference type="InterPro" id="IPR052260">
    <property type="entry name" value="Autophagy_Rcpt_SigReg"/>
</dbReference>
<dbReference type="InterPro" id="IPR053793">
    <property type="entry name" value="PB1-like"/>
</dbReference>
<dbReference type="InterPro" id="IPR000270">
    <property type="entry name" value="PB1_dom"/>
</dbReference>
<dbReference type="InterPro" id="IPR033741">
    <property type="entry name" value="SQSTM_UBA"/>
</dbReference>
<dbReference type="InterPro" id="IPR015940">
    <property type="entry name" value="UBA"/>
</dbReference>
<dbReference type="InterPro" id="IPR009060">
    <property type="entry name" value="UBA-like_sf"/>
</dbReference>
<dbReference type="InterPro" id="IPR000433">
    <property type="entry name" value="Znf_ZZ"/>
</dbReference>
<dbReference type="InterPro" id="IPR043145">
    <property type="entry name" value="Znf_ZZ_sf"/>
</dbReference>
<dbReference type="PANTHER" id="PTHR15090">
    <property type="entry name" value="SEQUESTOSOME 1-RELATED"/>
    <property type="match status" value="1"/>
</dbReference>
<dbReference type="PANTHER" id="PTHR15090:SF0">
    <property type="entry name" value="SEQUESTOSOME-1"/>
    <property type="match status" value="1"/>
</dbReference>
<dbReference type="Pfam" id="PF00564">
    <property type="entry name" value="PB1"/>
    <property type="match status" value="1"/>
</dbReference>
<dbReference type="Pfam" id="PF16577">
    <property type="entry name" value="UBA_5"/>
    <property type="match status" value="1"/>
</dbReference>
<dbReference type="Pfam" id="PF00569">
    <property type="entry name" value="ZZ"/>
    <property type="match status" value="1"/>
</dbReference>
<dbReference type="SMART" id="SM00291">
    <property type="entry name" value="ZnF_ZZ"/>
    <property type="match status" value="1"/>
</dbReference>
<dbReference type="SUPFAM" id="SSF57850">
    <property type="entry name" value="RING/U-box"/>
    <property type="match status" value="1"/>
</dbReference>
<dbReference type="SUPFAM" id="SSF46934">
    <property type="entry name" value="UBA-like"/>
    <property type="match status" value="1"/>
</dbReference>
<dbReference type="PROSITE" id="PS51745">
    <property type="entry name" value="PB1"/>
    <property type="match status" value="1"/>
</dbReference>
<dbReference type="PROSITE" id="PS50030">
    <property type="entry name" value="UBA"/>
    <property type="match status" value="1"/>
</dbReference>
<dbReference type="PROSITE" id="PS01357">
    <property type="entry name" value="ZF_ZZ_1"/>
    <property type="match status" value="1"/>
</dbReference>
<dbReference type="PROSITE" id="PS50135">
    <property type="entry name" value="ZF_ZZ_2"/>
    <property type="match status" value="1"/>
</dbReference>
<keyword id="KW-0963">Cytoplasm</keyword>
<keyword id="KW-0238">DNA-binding</keyword>
<keyword id="KW-0479">Metal-binding</keyword>
<keyword id="KW-0539">Nucleus</keyword>
<keyword id="KW-0677">Repeat</keyword>
<keyword id="KW-0804">Transcription</keyword>
<keyword id="KW-0862">Zinc</keyword>
<keyword id="KW-0863">Zinc-finger</keyword>
<evidence type="ECO:0000250" key="1">
    <source>
        <dbReference type="UniProtKB" id="P14199"/>
    </source>
</evidence>
<evidence type="ECO:0000255" key="2">
    <source>
        <dbReference type="PROSITE-ProRule" id="PRU00212"/>
    </source>
</evidence>
<evidence type="ECO:0000255" key="3">
    <source>
        <dbReference type="PROSITE-ProRule" id="PRU00228"/>
    </source>
</evidence>
<evidence type="ECO:0000255" key="4">
    <source>
        <dbReference type="PROSITE-ProRule" id="PRU01081"/>
    </source>
</evidence>
<evidence type="ECO:0000256" key="5">
    <source>
        <dbReference type="SAM" id="MobiDB-lite"/>
    </source>
</evidence>
<accession>Q24629</accession>